<proteinExistence type="inferred from homology"/>
<dbReference type="EMBL" id="BA000003">
    <property type="protein sequence ID" value="BAB12794.1"/>
    <property type="molecule type" value="Genomic_DNA"/>
</dbReference>
<dbReference type="RefSeq" id="NP_239908.1">
    <property type="nucleotide sequence ID" value="NC_002528.1"/>
</dbReference>
<dbReference type="RefSeq" id="WP_010895927.1">
    <property type="nucleotide sequence ID" value="NC_002528.1"/>
</dbReference>
<dbReference type="SMR" id="P57176"/>
<dbReference type="STRING" id="563178.BUAP5A_073"/>
<dbReference type="EnsemblBacteria" id="BAB12794">
    <property type="protein sequence ID" value="BAB12794"/>
    <property type="gene ID" value="BAB12794"/>
</dbReference>
<dbReference type="KEGG" id="buc:BU074"/>
<dbReference type="PATRIC" id="fig|107806.10.peg.80"/>
<dbReference type="eggNOG" id="COG1536">
    <property type="taxonomic scope" value="Bacteria"/>
</dbReference>
<dbReference type="HOGENOM" id="CLU_047835_2_0_6"/>
<dbReference type="Proteomes" id="UP000001806">
    <property type="component" value="Chromosome"/>
</dbReference>
<dbReference type="GO" id="GO:0009425">
    <property type="term" value="C:bacterial-type flagellum basal body"/>
    <property type="evidence" value="ECO:0007669"/>
    <property type="project" value="UniProtKB-SubCell"/>
</dbReference>
<dbReference type="GO" id="GO:0005886">
    <property type="term" value="C:plasma membrane"/>
    <property type="evidence" value="ECO:0007669"/>
    <property type="project" value="UniProtKB-SubCell"/>
</dbReference>
<dbReference type="GO" id="GO:0003774">
    <property type="term" value="F:cytoskeletal motor activity"/>
    <property type="evidence" value="ECO:0007669"/>
    <property type="project" value="InterPro"/>
</dbReference>
<dbReference type="GO" id="GO:0071973">
    <property type="term" value="P:bacterial-type flagellum-dependent cell motility"/>
    <property type="evidence" value="ECO:0007669"/>
    <property type="project" value="InterPro"/>
</dbReference>
<dbReference type="GO" id="GO:0006935">
    <property type="term" value="P:chemotaxis"/>
    <property type="evidence" value="ECO:0007669"/>
    <property type="project" value="UniProtKB-KW"/>
</dbReference>
<dbReference type="Gene3D" id="1.10.220.30">
    <property type="match status" value="3"/>
</dbReference>
<dbReference type="InterPro" id="IPR000090">
    <property type="entry name" value="Flg_Motor_Flig"/>
</dbReference>
<dbReference type="InterPro" id="IPR023087">
    <property type="entry name" value="Flg_Motor_Flig_C"/>
</dbReference>
<dbReference type="InterPro" id="IPR011002">
    <property type="entry name" value="FliG_a-hlx"/>
</dbReference>
<dbReference type="InterPro" id="IPR032779">
    <property type="entry name" value="FliG_M"/>
</dbReference>
<dbReference type="InterPro" id="IPR028263">
    <property type="entry name" value="FliG_N"/>
</dbReference>
<dbReference type="NCBIfam" id="TIGR00207">
    <property type="entry name" value="fliG"/>
    <property type="match status" value="1"/>
</dbReference>
<dbReference type="PANTHER" id="PTHR30534">
    <property type="entry name" value="FLAGELLAR MOTOR SWITCH PROTEIN FLIG"/>
    <property type="match status" value="1"/>
</dbReference>
<dbReference type="PANTHER" id="PTHR30534:SF0">
    <property type="entry name" value="FLAGELLAR MOTOR SWITCH PROTEIN FLIG"/>
    <property type="match status" value="1"/>
</dbReference>
<dbReference type="Pfam" id="PF01706">
    <property type="entry name" value="FliG_C"/>
    <property type="match status" value="1"/>
</dbReference>
<dbReference type="Pfam" id="PF14841">
    <property type="entry name" value="FliG_M"/>
    <property type="match status" value="1"/>
</dbReference>
<dbReference type="Pfam" id="PF14842">
    <property type="entry name" value="FliG_N"/>
    <property type="match status" value="1"/>
</dbReference>
<dbReference type="PRINTS" id="PR00954">
    <property type="entry name" value="FLGMOTORFLIG"/>
</dbReference>
<dbReference type="SUPFAM" id="SSF48029">
    <property type="entry name" value="FliG"/>
    <property type="match status" value="2"/>
</dbReference>
<feature type="chain" id="PRO_0000184085" description="Flagellar motor switch protein FliG">
    <location>
        <begin position="1"/>
        <end position="331"/>
    </location>
</feature>
<feature type="short sequence motif" description="Part of the EHPQR-motif">
    <location>
        <begin position="125"/>
        <end position="128"/>
    </location>
</feature>
<feature type="site" description="Part of the EHPQR-motif">
    <location>
        <position position="160"/>
    </location>
</feature>
<sequence length="331" mass="37808">MIVNGTEKSALLLMAIGSDQAGEILKHLTPFEVQELITAMVNIKRVSAQKLNEILLQCYNLAIKNNAFNCNNSDKYLIKMLTKALGEKKGTSLLKEALEIRNARICIKALNYMKAKQVAFLLDKEHPQIITTILICLNKNQSAEVLSFLSDKKRAEIILRIVDFHGIEESSLVELTQVINNLLKNKKLILSEKGGIKTAAQILNSMKIKHEKEIIENISKSNEQLADKIIKEIFLFENLVDLDDKYIKILLENIEKEKLHIALQNTSQAIREKFFKNMSHTESNELTLNLEKKSYISDISIKNEQKLILIMLKSIVENGRISLKNLREYYV</sequence>
<accession>P57176</accession>
<protein>
    <recommendedName>
        <fullName>Flagellar motor switch protein FliG</fullName>
    </recommendedName>
</protein>
<comment type="function">
    <text evidence="1">FliG is one of three proteins (FliG, FliN, FliM) that forms the rotor-mounted switch complex (C ring), located at the base of the basal body. This complex interacts with the CheY and CheZ chemotaxis proteins, in addition to contacting components of the motor that determine the direction of flagellar rotation (By similarity).</text>
</comment>
<comment type="subcellular location">
    <subcellularLocation>
        <location evidence="1">Cell inner membrane</location>
        <topology evidence="1">Peripheral membrane protein</topology>
        <orientation evidence="1">Cytoplasmic side</orientation>
    </subcellularLocation>
    <subcellularLocation>
        <location evidence="1">Bacterial flagellum basal body</location>
    </subcellularLocation>
</comment>
<comment type="similarity">
    <text evidence="2">Belongs to the FliG family.</text>
</comment>
<reference key="1">
    <citation type="journal article" date="2000" name="Nature">
        <title>Genome sequence of the endocellular bacterial symbiont of aphids Buchnera sp. APS.</title>
        <authorList>
            <person name="Shigenobu S."/>
            <person name="Watanabe H."/>
            <person name="Hattori M."/>
            <person name="Sakaki Y."/>
            <person name="Ishikawa H."/>
        </authorList>
    </citation>
    <scope>NUCLEOTIDE SEQUENCE [LARGE SCALE GENOMIC DNA]</scope>
    <source>
        <strain>APS</strain>
    </source>
</reference>
<evidence type="ECO:0000250" key="1"/>
<evidence type="ECO:0000305" key="2"/>
<keyword id="KW-0975">Bacterial flagellum</keyword>
<keyword id="KW-0997">Cell inner membrane</keyword>
<keyword id="KW-1003">Cell membrane</keyword>
<keyword id="KW-0145">Chemotaxis</keyword>
<keyword id="KW-0283">Flagellar rotation</keyword>
<keyword id="KW-0472">Membrane</keyword>
<keyword id="KW-1185">Reference proteome</keyword>
<name>FLIG_BUCAI</name>
<organism>
    <name type="scientific">Buchnera aphidicola subsp. Acyrthosiphon pisum (strain APS)</name>
    <name type="common">Acyrthosiphon pisum symbiotic bacterium</name>
    <dbReference type="NCBI Taxonomy" id="107806"/>
    <lineage>
        <taxon>Bacteria</taxon>
        <taxon>Pseudomonadati</taxon>
        <taxon>Pseudomonadota</taxon>
        <taxon>Gammaproteobacteria</taxon>
        <taxon>Enterobacterales</taxon>
        <taxon>Erwiniaceae</taxon>
        <taxon>Buchnera</taxon>
    </lineage>
</organism>
<gene>
    <name type="primary">fliG</name>
    <name type="ordered locus">BU074</name>
</gene>